<protein>
    <recommendedName>
        <fullName evidence="1">UDP-N-acetylmuramate--L-alanine ligase</fullName>
        <ecNumber evidence="1">6.3.2.8</ecNumber>
    </recommendedName>
    <alternativeName>
        <fullName evidence="1">UDP-N-acetylmuramoyl-L-alanine synthetase</fullName>
    </alternativeName>
</protein>
<organism>
    <name type="scientific">Vibrio cholerae serotype O1 (strain ATCC 39541 / Classical Ogawa 395 / O395)</name>
    <dbReference type="NCBI Taxonomy" id="345073"/>
    <lineage>
        <taxon>Bacteria</taxon>
        <taxon>Pseudomonadati</taxon>
        <taxon>Pseudomonadota</taxon>
        <taxon>Gammaproteobacteria</taxon>
        <taxon>Vibrionales</taxon>
        <taxon>Vibrionaceae</taxon>
        <taxon>Vibrio</taxon>
    </lineage>
</organism>
<feature type="chain" id="PRO_1000071099" description="UDP-N-acetylmuramate--L-alanine ligase">
    <location>
        <begin position="1"/>
        <end position="486"/>
    </location>
</feature>
<feature type="binding site" evidence="1">
    <location>
        <begin position="129"/>
        <end position="135"/>
    </location>
    <ligand>
        <name>ATP</name>
        <dbReference type="ChEBI" id="CHEBI:30616"/>
    </ligand>
</feature>
<keyword id="KW-0067">ATP-binding</keyword>
<keyword id="KW-0131">Cell cycle</keyword>
<keyword id="KW-0132">Cell division</keyword>
<keyword id="KW-0133">Cell shape</keyword>
<keyword id="KW-0961">Cell wall biogenesis/degradation</keyword>
<keyword id="KW-0963">Cytoplasm</keyword>
<keyword id="KW-0436">Ligase</keyword>
<keyword id="KW-0547">Nucleotide-binding</keyword>
<keyword id="KW-0573">Peptidoglycan synthesis</keyword>
<accession>A5F5M8</accession>
<accession>C3M4C2</accession>
<sequence length="486" mass="53041">MTIKHTQDLAQIRAMVPEMRRVKAIHFIGIGGAGMSGIAEVLLNEGYQISGSDLAANAVTDRLADKGATIFIGHEAHNVAHASVVVVSTAINEQNPEIQAAREKRIPIVRRAEMLAELMRFRHGIAVAGTHGKTTTTALVTQIYSEAGLDPTFVNGGLVKSAGTNARLGSSRILIAEADESDASFLHLQPMVTIVTNIEADHMDTYGGDFENLKQTFIDFLHNLPFYGQAILCIDDPVIRELIPRVSRQVITYGFSEDADVRIENYRQNGQQGQFTVVRKGKANLDITLNIPGRHNALNAAAAIAVATEDDIRDEAILRAMANTQGTGRRFDHLGEFETGNGVAMLVDDYGHHPTEVDVTIKAARNGWAEKRLVMIFQPHRYTRTRDLYDDFANVLEQVDVLLMLDVYAAGEKPIAGADGRSLCRTIRSRGKIDPIFVPDSQTLPSVLANILQDGDLVLTQGAGDVGKVARHLAALELNIGRMQQI</sequence>
<evidence type="ECO:0000255" key="1">
    <source>
        <dbReference type="HAMAP-Rule" id="MF_00046"/>
    </source>
</evidence>
<evidence type="ECO:0000305" key="2"/>
<dbReference type="EC" id="6.3.2.8" evidence="1"/>
<dbReference type="EMBL" id="CP000627">
    <property type="protein sequence ID" value="ABQ21776.1"/>
    <property type="molecule type" value="Genomic_DNA"/>
</dbReference>
<dbReference type="EMBL" id="CP001235">
    <property type="protein sequence ID" value="ACP10504.1"/>
    <property type="status" value="ALT_INIT"/>
    <property type="molecule type" value="Genomic_DNA"/>
</dbReference>
<dbReference type="RefSeq" id="WP_000152805.1">
    <property type="nucleotide sequence ID" value="NZ_JAACZH010000010.1"/>
</dbReference>
<dbReference type="SMR" id="A5F5M8"/>
<dbReference type="KEGG" id="vco:VC0395_A1978"/>
<dbReference type="KEGG" id="vcr:VC395_2515"/>
<dbReference type="PATRIC" id="fig|345073.21.peg.2419"/>
<dbReference type="eggNOG" id="COG0773">
    <property type="taxonomic scope" value="Bacteria"/>
</dbReference>
<dbReference type="HOGENOM" id="CLU_028104_2_2_6"/>
<dbReference type="OrthoDB" id="9804126at2"/>
<dbReference type="UniPathway" id="UPA00219"/>
<dbReference type="Proteomes" id="UP000000249">
    <property type="component" value="Chromosome 2"/>
</dbReference>
<dbReference type="GO" id="GO:0005737">
    <property type="term" value="C:cytoplasm"/>
    <property type="evidence" value="ECO:0007669"/>
    <property type="project" value="UniProtKB-SubCell"/>
</dbReference>
<dbReference type="GO" id="GO:0005524">
    <property type="term" value="F:ATP binding"/>
    <property type="evidence" value="ECO:0007669"/>
    <property type="project" value="UniProtKB-UniRule"/>
</dbReference>
<dbReference type="GO" id="GO:0008763">
    <property type="term" value="F:UDP-N-acetylmuramate-L-alanine ligase activity"/>
    <property type="evidence" value="ECO:0007669"/>
    <property type="project" value="UniProtKB-UniRule"/>
</dbReference>
<dbReference type="GO" id="GO:0051301">
    <property type="term" value="P:cell division"/>
    <property type="evidence" value="ECO:0007669"/>
    <property type="project" value="UniProtKB-KW"/>
</dbReference>
<dbReference type="GO" id="GO:0071555">
    <property type="term" value="P:cell wall organization"/>
    <property type="evidence" value="ECO:0007669"/>
    <property type="project" value="UniProtKB-KW"/>
</dbReference>
<dbReference type="GO" id="GO:0009252">
    <property type="term" value="P:peptidoglycan biosynthetic process"/>
    <property type="evidence" value="ECO:0007669"/>
    <property type="project" value="UniProtKB-UniRule"/>
</dbReference>
<dbReference type="GO" id="GO:0008360">
    <property type="term" value="P:regulation of cell shape"/>
    <property type="evidence" value="ECO:0007669"/>
    <property type="project" value="UniProtKB-KW"/>
</dbReference>
<dbReference type="FunFam" id="3.40.1190.10:FF:000001">
    <property type="entry name" value="UDP-N-acetylmuramate--L-alanine ligase"/>
    <property type="match status" value="1"/>
</dbReference>
<dbReference type="FunFam" id="3.40.50.720:FF:000046">
    <property type="entry name" value="UDP-N-acetylmuramate--L-alanine ligase"/>
    <property type="match status" value="1"/>
</dbReference>
<dbReference type="FunFam" id="3.90.190.20:FF:000001">
    <property type="entry name" value="UDP-N-acetylmuramate--L-alanine ligase"/>
    <property type="match status" value="1"/>
</dbReference>
<dbReference type="Gene3D" id="3.90.190.20">
    <property type="entry name" value="Mur ligase, C-terminal domain"/>
    <property type="match status" value="1"/>
</dbReference>
<dbReference type="Gene3D" id="3.40.1190.10">
    <property type="entry name" value="Mur-like, catalytic domain"/>
    <property type="match status" value="1"/>
</dbReference>
<dbReference type="Gene3D" id="3.40.50.720">
    <property type="entry name" value="NAD(P)-binding Rossmann-like Domain"/>
    <property type="match status" value="1"/>
</dbReference>
<dbReference type="HAMAP" id="MF_00046">
    <property type="entry name" value="MurC"/>
    <property type="match status" value="1"/>
</dbReference>
<dbReference type="InterPro" id="IPR036565">
    <property type="entry name" value="Mur-like_cat_sf"/>
</dbReference>
<dbReference type="InterPro" id="IPR004101">
    <property type="entry name" value="Mur_ligase_C"/>
</dbReference>
<dbReference type="InterPro" id="IPR036615">
    <property type="entry name" value="Mur_ligase_C_dom_sf"/>
</dbReference>
<dbReference type="InterPro" id="IPR013221">
    <property type="entry name" value="Mur_ligase_cen"/>
</dbReference>
<dbReference type="InterPro" id="IPR000713">
    <property type="entry name" value="Mur_ligase_N"/>
</dbReference>
<dbReference type="InterPro" id="IPR050061">
    <property type="entry name" value="MurCDEF_pg_biosynth"/>
</dbReference>
<dbReference type="InterPro" id="IPR005758">
    <property type="entry name" value="UDP-N-AcMur_Ala_ligase_MurC"/>
</dbReference>
<dbReference type="NCBIfam" id="TIGR01082">
    <property type="entry name" value="murC"/>
    <property type="match status" value="1"/>
</dbReference>
<dbReference type="PANTHER" id="PTHR43445:SF3">
    <property type="entry name" value="UDP-N-ACETYLMURAMATE--L-ALANINE LIGASE"/>
    <property type="match status" value="1"/>
</dbReference>
<dbReference type="PANTHER" id="PTHR43445">
    <property type="entry name" value="UDP-N-ACETYLMURAMATE--L-ALANINE LIGASE-RELATED"/>
    <property type="match status" value="1"/>
</dbReference>
<dbReference type="Pfam" id="PF01225">
    <property type="entry name" value="Mur_ligase"/>
    <property type="match status" value="1"/>
</dbReference>
<dbReference type="Pfam" id="PF02875">
    <property type="entry name" value="Mur_ligase_C"/>
    <property type="match status" value="1"/>
</dbReference>
<dbReference type="Pfam" id="PF08245">
    <property type="entry name" value="Mur_ligase_M"/>
    <property type="match status" value="1"/>
</dbReference>
<dbReference type="SUPFAM" id="SSF51984">
    <property type="entry name" value="MurCD N-terminal domain"/>
    <property type="match status" value="1"/>
</dbReference>
<dbReference type="SUPFAM" id="SSF53623">
    <property type="entry name" value="MurD-like peptide ligases, catalytic domain"/>
    <property type="match status" value="1"/>
</dbReference>
<dbReference type="SUPFAM" id="SSF53244">
    <property type="entry name" value="MurD-like peptide ligases, peptide-binding domain"/>
    <property type="match status" value="1"/>
</dbReference>
<proteinExistence type="inferred from homology"/>
<reference key="1">
    <citation type="submission" date="2007-03" db="EMBL/GenBank/DDBJ databases">
        <authorList>
            <person name="Heidelberg J."/>
        </authorList>
    </citation>
    <scope>NUCLEOTIDE SEQUENCE [LARGE SCALE GENOMIC DNA]</scope>
    <source>
        <strain>ATCC 39541 / Classical Ogawa 395 / O395</strain>
    </source>
</reference>
<reference key="2">
    <citation type="journal article" date="2008" name="PLoS ONE">
        <title>A recalibrated molecular clock and independent origins for the cholera pandemic clones.</title>
        <authorList>
            <person name="Feng L."/>
            <person name="Reeves P.R."/>
            <person name="Lan R."/>
            <person name="Ren Y."/>
            <person name="Gao C."/>
            <person name="Zhou Z."/>
            <person name="Ren Y."/>
            <person name="Cheng J."/>
            <person name="Wang W."/>
            <person name="Wang J."/>
            <person name="Qian W."/>
            <person name="Li D."/>
            <person name="Wang L."/>
        </authorList>
    </citation>
    <scope>NUCLEOTIDE SEQUENCE [LARGE SCALE GENOMIC DNA]</scope>
    <source>
        <strain>ATCC 39541 / Classical Ogawa 395 / O395</strain>
    </source>
</reference>
<name>MURC_VIBC3</name>
<gene>
    <name evidence="1" type="primary">murC</name>
    <name type="ordered locus">VC0395_A1978</name>
    <name type="ordered locus">VC395_2515</name>
</gene>
<comment type="function">
    <text evidence="1">Cell wall formation.</text>
</comment>
<comment type="catalytic activity">
    <reaction evidence="1">
        <text>UDP-N-acetyl-alpha-D-muramate + L-alanine + ATP = UDP-N-acetyl-alpha-D-muramoyl-L-alanine + ADP + phosphate + H(+)</text>
        <dbReference type="Rhea" id="RHEA:23372"/>
        <dbReference type="ChEBI" id="CHEBI:15378"/>
        <dbReference type="ChEBI" id="CHEBI:30616"/>
        <dbReference type="ChEBI" id="CHEBI:43474"/>
        <dbReference type="ChEBI" id="CHEBI:57972"/>
        <dbReference type="ChEBI" id="CHEBI:70757"/>
        <dbReference type="ChEBI" id="CHEBI:83898"/>
        <dbReference type="ChEBI" id="CHEBI:456216"/>
        <dbReference type="EC" id="6.3.2.8"/>
    </reaction>
</comment>
<comment type="pathway">
    <text evidence="1">Cell wall biogenesis; peptidoglycan biosynthesis.</text>
</comment>
<comment type="subcellular location">
    <subcellularLocation>
        <location evidence="1">Cytoplasm</location>
    </subcellularLocation>
</comment>
<comment type="similarity">
    <text evidence="1">Belongs to the MurCDEF family.</text>
</comment>
<comment type="sequence caution" evidence="2">
    <conflict type="erroneous initiation">
        <sequence resource="EMBL-CDS" id="ACP10504"/>
    </conflict>
</comment>